<reference key="1">
    <citation type="journal article" date="1993" name="Mol. Biol. Cell">
        <title>NUP2, a novel yeast nucleoporin, has functional overlap with other proteins of the nuclear pore complex.</title>
        <authorList>
            <person name="Loeb J.D.J."/>
            <person name="Davis L.I."/>
            <person name="Fink G.R."/>
        </authorList>
    </citation>
    <scope>NUCLEOTIDE SEQUENCE [GENOMIC DNA]</scope>
    <source>
        <strain>ATCC 204508 / S288c</strain>
    </source>
</reference>
<reference key="2">
    <citation type="journal article" date="1997" name="Nature">
        <title>The nucleotide sequence of Saccharomyces cerevisiae chromosome XII.</title>
        <authorList>
            <person name="Johnston M."/>
            <person name="Hillier L.W."/>
            <person name="Riles L."/>
            <person name="Albermann K."/>
            <person name="Andre B."/>
            <person name="Ansorge W."/>
            <person name="Benes V."/>
            <person name="Brueckner M."/>
            <person name="Delius H."/>
            <person name="Dubois E."/>
            <person name="Duesterhoeft A."/>
            <person name="Entian K.-D."/>
            <person name="Floeth M."/>
            <person name="Goffeau A."/>
            <person name="Hebling U."/>
            <person name="Heumann K."/>
            <person name="Heuss-Neitzel D."/>
            <person name="Hilbert H."/>
            <person name="Hilger F."/>
            <person name="Kleine K."/>
            <person name="Koetter P."/>
            <person name="Louis E.J."/>
            <person name="Messenguy F."/>
            <person name="Mewes H.-W."/>
            <person name="Miosga T."/>
            <person name="Moestl D."/>
            <person name="Mueller-Auer S."/>
            <person name="Nentwich U."/>
            <person name="Obermaier B."/>
            <person name="Piravandi E."/>
            <person name="Pohl T.M."/>
            <person name="Portetelle D."/>
            <person name="Purnelle B."/>
            <person name="Rechmann S."/>
            <person name="Rieger M."/>
            <person name="Rinke M."/>
            <person name="Rose M."/>
            <person name="Scharfe M."/>
            <person name="Scherens B."/>
            <person name="Scholler P."/>
            <person name="Schwager C."/>
            <person name="Schwarz S."/>
            <person name="Underwood A.P."/>
            <person name="Urrestarazu L.A."/>
            <person name="Vandenbol M."/>
            <person name="Verhasselt P."/>
            <person name="Vierendeels F."/>
            <person name="Voet M."/>
            <person name="Volckaert G."/>
            <person name="Voss H."/>
            <person name="Wambutt R."/>
            <person name="Wedler E."/>
            <person name="Wedler H."/>
            <person name="Zimmermann F.K."/>
            <person name="Zollner A."/>
            <person name="Hani J."/>
            <person name="Hoheisel J.D."/>
        </authorList>
    </citation>
    <scope>NUCLEOTIDE SEQUENCE [LARGE SCALE GENOMIC DNA]</scope>
    <source>
        <strain>ATCC 204508 / S288c</strain>
    </source>
</reference>
<reference key="3">
    <citation type="journal article" date="2014" name="G3 (Bethesda)">
        <title>The reference genome sequence of Saccharomyces cerevisiae: Then and now.</title>
        <authorList>
            <person name="Engel S.R."/>
            <person name="Dietrich F.S."/>
            <person name="Fisk D.G."/>
            <person name="Binkley G."/>
            <person name="Balakrishnan R."/>
            <person name="Costanzo M.C."/>
            <person name="Dwight S.S."/>
            <person name="Hitz B.C."/>
            <person name="Karra K."/>
            <person name="Nash R.S."/>
            <person name="Weng S."/>
            <person name="Wong E.D."/>
            <person name="Lloyd P."/>
            <person name="Skrzypek M.S."/>
            <person name="Miyasato S.R."/>
            <person name="Simison M."/>
            <person name="Cherry J.M."/>
        </authorList>
    </citation>
    <scope>GENOME REANNOTATION</scope>
    <source>
        <strain>ATCC 204508 / S288c</strain>
    </source>
</reference>
<reference key="4">
    <citation type="journal article" date="1999" name="J. Cell Biol.">
        <title>The karyopherin Kap122p/Pdr6p imports both subunits of the transcription factor IIA into the nucleus.</title>
        <authorList>
            <person name="Titov A.A."/>
            <person name="Blobel G."/>
        </authorList>
    </citation>
    <scope>INTERACTION WITH KAP122</scope>
</reference>
<reference key="5">
    <citation type="journal article" date="2000" name="J. Cell Biol.">
        <title>The yeast nuclear pore complex: composition, architecture, and transport mechanism.</title>
        <authorList>
            <person name="Rout M.P."/>
            <person name="Aitchison J.D."/>
            <person name="Suprapto A."/>
            <person name="Hjertaas K."/>
            <person name="Zhao Y."/>
            <person name="Chait B.T."/>
        </authorList>
    </citation>
    <scope>FUNCTION</scope>
    <scope>IDENTIFICATION IN THE NUCLEAR PORE COMPLEX</scope>
    <scope>SUBCELLULAR LOCATION</scope>
</reference>
<reference key="6">
    <citation type="journal article" date="2000" name="Mol. Cell. Biol.">
        <title>Nup2p, a yeast nucleoporin, functions in bidirectional transport of importin alpha.</title>
        <authorList>
            <person name="Solsbacher J."/>
            <person name="Maurer P."/>
            <person name="Vogel F."/>
            <person name="Schlenstedt G."/>
        </authorList>
    </citation>
    <scope>FUNCTION</scope>
    <scope>SRP1 RECYCLING</scope>
</reference>
<reference key="7">
    <citation type="journal article" date="2001" name="J. Biol. Chem.">
        <title>Proteomic analysis of nucleoporin interacting proteins.</title>
        <authorList>
            <person name="Allen N.P."/>
            <person name="Huang L."/>
            <person name="Burlingame A."/>
            <person name="Rexach M."/>
        </authorList>
    </citation>
    <scope>FUNCTION</scope>
    <scope>INTERACTION THROUGH FG REPEATS</scope>
</reference>
<reference key="8">
    <citation type="journal article" date="2001" name="J. Cell Biol.">
        <title>Nup2p dynamically associates with the distal regions of the yeast nuclear pore complex.</title>
        <authorList>
            <person name="Dilworth D.J."/>
            <person name="Suprapto A."/>
            <person name="Padovan J.C."/>
            <person name="Chait B.T."/>
            <person name="Wozniak R.W."/>
            <person name="Rout M.P."/>
            <person name="Aitchison J.D."/>
        </authorList>
    </citation>
    <scope>FUNCTION</scope>
    <scope>ASSOCIATION WITH NPC</scope>
</reference>
<reference key="9">
    <citation type="journal article" date="2001" name="J. Cell Biol.">
        <title>The nucleoporin Nup60p functions as a Gsp1p-GTP-sensitive tether for Nup2p at the nuclear pore complex.</title>
        <authorList>
            <person name="Denning D.P."/>
            <person name="Mykytka B."/>
            <person name="Allen N.P."/>
            <person name="Huang L."/>
            <person name="Burlingame A."/>
            <person name="Rexach M."/>
        </authorList>
    </citation>
    <scope>FUNCTION</scope>
    <scope>INTERACTION WITH NUP60</scope>
</reference>
<reference key="10">
    <citation type="journal article" date="2002" name="J. Biol. Chem.">
        <title>GLFG and FxFG nucleoporins bind to overlapping sites on importin-beta.</title>
        <authorList>
            <person name="Bayliss R."/>
            <person name="Littlewood T."/>
            <person name="Strawn L.A."/>
            <person name="Wente S.R."/>
            <person name="Stewart M."/>
        </authorList>
    </citation>
    <scope>FUNCTION</scope>
    <scope>STRUCTURAL BASIS OF FG REPEAT INTERACTION</scope>
</reference>
<reference key="11">
    <citation type="journal article" date="2002" name="Mol. Cell. Proteomics">
        <title>Deciphering networks of protein interactions at the nuclear pore complex.</title>
        <authorList>
            <person name="Allen N.P."/>
            <person name="Patel S.S."/>
            <person name="Huang L."/>
            <person name="Chalkley R.J."/>
            <person name="Burlingame A."/>
            <person name="Lutzmann M."/>
            <person name="Hurt E.C."/>
            <person name="Rexach M."/>
        </authorList>
    </citation>
    <scope>FUNCTION</scope>
    <scope>INTERACTION WITH KARYOPHERINS THROUGH FG REPEATS</scope>
</reference>
<reference key="12">
    <citation type="journal article" date="2002" name="Cell">
        <title>Chromatin boundaries in budding yeast: the nuclear pore connection.</title>
        <authorList>
            <person name="Ishii K."/>
            <person name="Arib G."/>
            <person name="Lin C."/>
            <person name="Van Houwe G."/>
            <person name="Laemmli U.K."/>
        </authorList>
    </citation>
    <scope>FUNCTION</scope>
    <scope>CHROMATIN BOUNDARY ACTIVITY</scope>
</reference>
<reference key="13">
    <citation type="journal article" date="2002" name="J. Biol. Chem.">
        <title>Accelerating the rate of disassembly of karyopherin-cargo complexes.</title>
        <authorList>
            <person name="Gilchrist D."/>
            <person name="Mykytka B."/>
            <person name="Rexach M."/>
        </authorList>
    </citation>
    <scope>FUNCTION</scope>
    <scope>SRP1-KAP95 NUCLEAR IMPORT COMPLEX DISASSEMBLY</scope>
</reference>
<reference key="14">
    <citation type="journal article" date="2003" name="J. Biol. Chem.">
        <title>A gradient of affinity for the karyopherin Kap95p along the yeast nuclear pore complex.</title>
        <authorList>
            <person name="Pyhtila B."/>
            <person name="Rexach M."/>
        </authorList>
    </citation>
    <scope>FUNCTION</scope>
    <scope>FG REPEAT AFFINITY GRADIENT FOR KARYOPHERIN KAP95</scope>
</reference>
<reference key="15">
    <citation type="journal article" date="2003" name="Nature">
        <title>Global analysis of protein expression in yeast.</title>
        <authorList>
            <person name="Ghaemmaghami S."/>
            <person name="Huh W.-K."/>
            <person name="Bower K."/>
            <person name="Howson R.W."/>
            <person name="Belle A."/>
            <person name="Dephoure N."/>
            <person name="O'Shea E.K."/>
            <person name="Weissman J.S."/>
        </authorList>
    </citation>
    <scope>LEVEL OF PROTEIN EXPRESSION [LARGE SCALE ANALYSIS]</scope>
</reference>
<reference key="16">
    <citation type="journal article" date="2003" name="Proc. Natl. Acad. Sci. U.S.A.">
        <title>Disorder in the nuclear pore complex: the FG repeat regions of nucleoporins are natively unfolded.</title>
        <authorList>
            <person name="Denning D.P."/>
            <person name="Patel S.S."/>
            <person name="Uversky V."/>
            <person name="Fink A.L."/>
            <person name="Rexach M."/>
        </authorList>
    </citation>
    <scope>FUNCTION</scope>
    <scope>FG REPEAT STRUCTURE</scope>
</reference>
<reference key="17">
    <citation type="journal article" date="2003" name="J. Biol. Chem.">
        <title>Molecular basis for the rapid dissociation of nuclear localization signals from karyopherin alpha in the nucleoplasm.</title>
        <authorList>
            <person name="Gilchrist D."/>
            <person name="Rexach M."/>
        </authorList>
    </citation>
    <scope>FUNCTION</scope>
    <scope>INTERACTION WITH SRP1</scope>
</reference>
<reference key="18">
    <citation type="journal article" date="2004" name="Nat. Cell Biol.">
        <title>Minimal nuclear pore complexes define FG repeat domains essential for transport.</title>
        <authorList>
            <person name="Strawn L.A."/>
            <person name="Shen T.X."/>
            <person name="Shulga N."/>
            <person name="Goldfarb D.S."/>
            <person name="Wente S.R."/>
        </authorList>
    </citation>
    <scope>FUNCTION</scope>
    <scope>FG REPEATS IN NPC TRANSPORT</scope>
</reference>
<reference key="19">
    <citation type="journal article" date="2003" name="Dev. Cell">
        <title>Peering through the pore: nuclear pore complex structure, assembly, and function.</title>
        <authorList>
            <person name="Suntharalingam M."/>
            <person name="Wente S.R."/>
        </authorList>
    </citation>
    <scope>REVIEW</scope>
</reference>
<reference key="20">
    <citation type="journal article" date="2007" name="J. Proteome Res.">
        <title>Large-scale phosphorylation analysis of alpha-factor-arrested Saccharomyces cerevisiae.</title>
        <authorList>
            <person name="Li X."/>
            <person name="Gerber S.A."/>
            <person name="Rudner A.D."/>
            <person name="Beausoleil S.A."/>
            <person name="Haas W."/>
            <person name="Villen J."/>
            <person name="Elias J.E."/>
            <person name="Gygi S.P."/>
        </authorList>
    </citation>
    <scope>PHOSPHORYLATION [LARGE SCALE ANALYSIS] AT SER-17; SER-20; SER-165 AND SER-203</scope>
    <scope>IDENTIFICATION BY MASS SPECTROMETRY [LARGE SCALE ANALYSIS]</scope>
    <source>
        <strain>ADR376</strain>
    </source>
</reference>
<reference key="21">
    <citation type="journal article" date="2007" name="Proc. Natl. Acad. Sci. U.S.A.">
        <title>Analysis of phosphorylation sites on proteins from Saccharomyces cerevisiae by electron transfer dissociation (ETD) mass spectrometry.</title>
        <authorList>
            <person name="Chi A."/>
            <person name="Huttenhower C."/>
            <person name="Geer L.Y."/>
            <person name="Coon J.J."/>
            <person name="Syka J.E.P."/>
            <person name="Bai D.L."/>
            <person name="Shabanowitz J."/>
            <person name="Burke D.J."/>
            <person name="Troyanskaya O.G."/>
            <person name="Hunt D.F."/>
        </authorList>
    </citation>
    <scope>PHOSPHORYLATION [LARGE SCALE ANALYSIS] AT SER-17; SER-20; SER-203 AND SER-205</scope>
    <scope>IDENTIFICATION BY MASS SPECTROMETRY [LARGE SCALE ANALYSIS]</scope>
</reference>
<reference key="22">
    <citation type="journal article" date="2008" name="Mol. Cell. Proteomics">
        <title>A multidimensional chromatography technology for in-depth phosphoproteome analysis.</title>
        <authorList>
            <person name="Albuquerque C.P."/>
            <person name="Smolka M.B."/>
            <person name="Payne S.H."/>
            <person name="Bafna V."/>
            <person name="Eng J."/>
            <person name="Zhou H."/>
        </authorList>
    </citation>
    <scope>PHOSPHORYLATION [LARGE SCALE ANALYSIS] AT SER-17; SER-20; SER-137; SER-203; SER-205 AND SER-351</scope>
    <scope>IDENTIFICATION BY MASS SPECTROMETRY [LARGE SCALE ANALYSIS]</scope>
</reference>
<reference key="23">
    <citation type="journal article" date="2009" name="Science">
        <title>Global analysis of Cdk1 substrate phosphorylation sites provides insights into evolution.</title>
        <authorList>
            <person name="Holt L.J."/>
            <person name="Tuch B.B."/>
            <person name="Villen J."/>
            <person name="Johnson A.D."/>
            <person name="Gygi S.P."/>
            <person name="Morgan D.O."/>
        </authorList>
    </citation>
    <scope>PHOSPHORYLATION [LARGE SCALE ANALYSIS] AT SER-17; SER-20; SER-203; SER-348; THR-361; SER-581 AND THR-590</scope>
    <scope>IDENTIFICATION BY MASS SPECTROMETRY [LARGE SCALE ANALYSIS]</scope>
</reference>
<reference key="24">
    <citation type="journal article" date="2003" name="EMBO J.">
        <title>Structural basis for Nup2p function in cargo release and karyopherin recycling in nuclear import.</title>
        <authorList>
            <person name="Matsuura Y."/>
            <person name="Lange A."/>
            <person name="Harreman M.T."/>
            <person name="Corbett A.H."/>
            <person name="Stewart M."/>
        </authorList>
    </citation>
    <scope>X-RAY CRYSTALLOGRAPHY (2.6 ANGSTROMS) OF 36-50 IN COMPLEX WITH SRP1</scope>
</reference>
<feature type="chain" id="PRO_0000204903" description="Nucleoporin NUP2">
    <location>
        <begin position="1"/>
        <end position="720"/>
    </location>
</feature>
<feature type="repeat" description="FXF 1">
    <location>
        <begin position="67"/>
        <end position="69"/>
    </location>
</feature>
<feature type="repeat" description="FXFG 1">
    <location>
        <begin position="189"/>
        <end position="192"/>
    </location>
</feature>
<feature type="repeat" description="FXF 2">
    <location>
        <begin position="216"/>
        <end position="218"/>
    </location>
</feature>
<feature type="repeat" description="FXF 3">
    <location>
        <begin position="247"/>
        <end position="249"/>
    </location>
</feature>
<feature type="repeat" description="FXFG 2">
    <location>
        <begin position="285"/>
        <end position="288"/>
    </location>
</feature>
<feature type="repeat" description="FXFG 3">
    <location>
        <begin position="302"/>
        <end position="305"/>
    </location>
</feature>
<feature type="repeat" description="FXFG 4">
    <location>
        <begin position="318"/>
        <end position="321"/>
    </location>
</feature>
<feature type="repeat" description="FXF 4">
    <location>
        <begin position="352"/>
        <end position="354"/>
    </location>
</feature>
<feature type="repeat" description="FXFG 5">
    <location>
        <begin position="369"/>
        <end position="372"/>
    </location>
</feature>
<feature type="repeat" description="FXFG 6">
    <location>
        <begin position="386"/>
        <end position="389"/>
    </location>
</feature>
<feature type="repeat" description="FXFG 7">
    <location>
        <begin position="438"/>
        <end position="441"/>
    </location>
</feature>
<feature type="repeat" description="FXFG 8">
    <location>
        <begin position="474"/>
        <end position="477"/>
    </location>
</feature>
<feature type="repeat" description="FXFG 9">
    <location>
        <begin position="493"/>
        <end position="496"/>
    </location>
</feature>
<feature type="repeat" description="FXFG 10">
    <location>
        <begin position="511"/>
        <end position="514"/>
    </location>
</feature>
<feature type="repeat" description="FXFG 11">
    <location>
        <begin position="524"/>
        <end position="527"/>
    </location>
</feature>
<feature type="repeat" description="FXF 5">
    <location>
        <begin position="550"/>
        <end position="552"/>
    </location>
</feature>
<feature type="domain" description="RanBD1" evidence="1">
    <location>
        <begin position="583"/>
        <end position="720"/>
    </location>
</feature>
<feature type="region of interest" description="Disordered" evidence="2">
    <location>
        <begin position="1"/>
        <end position="33"/>
    </location>
</feature>
<feature type="region of interest" description="Interaction with SRP1 NLS binding site 1">
    <location>
        <begin position="35"/>
        <end position="50"/>
    </location>
</feature>
<feature type="region of interest" description="Disordered" evidence="2">
    <location>
        <begin position="52"/>
        <end position="92"/>
    </location>
</feature>
<feature type="region of interest" description="Disordered" evidence="2">
    <location>
        <begin position="136"/>
        <end position="278"/>
    </location>
</feature>
<feature type="region of interest" description="Disordered" evidence="2">
    <location>
        <begin position="315"/>
        <end position="604"/>
    </location>
</feature>
<feature type="compositionally biased region" description="Polar residues" evidence="2">
    <location>
        <begin position="81"/>
        <end position="92"/>
    </location>
</feature>
<feature type="compositionally biased region" description="Basic and acidic residues" evidence="2">
    <location>
        <begin position="147"/>
        <end position="159"/>
    </location>
</feature>
<feature type="compositionally biased region" description="Basic and acidic residues" evidence="2">
    <location>
        <begin position="193"/>
        <end position="202"/>
    </location>
</feature>
<feature type="compositionally biased region" description="Polar residues" evidence="2">
    <location>
        <begin position="243"/>
        <end position="278"/>
    </location>
</feature>
<feature type="compositionally biased region" description="Polar residues" evidence="2">
    <location>
        <begin position="315"/>
        <end position="324"/>
    </location>
</feature>
<feature type="compositionally biased region" description="Low complexity" evidence="2">
    <location>
        <begin position="345"/>
        <end position="360"/>
    </location>
</feature>
<feature type="compositionally biased region" description="Polar residues" evidence="2">
    <location>
        <begin position="373"/>
        <end position="384"/>
    </location>
</feature>
<feature type="compositionally biased region" description="Basic and acidic residues" evidence="2">
    <location>
        <begin position="424"/>
        <end position="435"/>
    </location>
</feature>
<feature type="compositionally biased region" description="Low complexity" evidence="2">
    <location>
        <begin position="479"/>
        <end position="495"/>
    </location>
</feature>
<feature type="compositionally biased region" description="Polar residues" evidence="2">
    <location>
        <begin position="513"/>
        <end position="533"/>
    </location>
</feature>
<feature type="compositionally biased region" description="Low complexity" evidence="2">
    <location>
        <begin position="534"/>
        <end position="548"/>
    </location>
</feature>
<feature type="compositionally biased region" description="Polar residues" evidence="2">
    <location>
        <begin position="574"/>
        <end position="584"/>
    </location>
</feature>
<feature type="modified residue" description="Phosphoserine" evidence="20 21 22 23">
    <location>
        <position position="17"/>
    </location>
</feature>
<feature type="modified residue" description="Phosphoserine" evidence="20 21 22 23">
    <location>
        <position position="20"/>
    </location>
</feature>
<feature type="modified residue" description="Phosphoserine" evidence="22">
    <location>
        <position position="137"/>
    </location>
</feature>
<feature type="modified residue" description="Phosphoserine" evidence="21">
    <location>
        <position position="165"/>
    </location>
</feature>
<feature type="modified residue" description="Phosphoserine" evidence="20 21 22 23">
    <location>
        <position position="203"/>
    </location>
</feature>
<feature type="modified residue" description="Phosphoserine" evidence="20 22">
    <location>
        <position position="205"/>
    </location>
</feature>
<feature type="modified residue" description="Phosphoserine" evidence="23">
    <location>
        <position position="348"/>
    </location>
</feature>
<feature type="modified residue" description="Phosphoserine" evidence="22">
    <location>
        <position position="351"/>
    </location>
</feature>
<feature type="modified residue" description="Phosphothreonine" evidence="23">
    <location>
        <position position="361"/>
    </location>
</feature>
<feature type="modified residue" description="Phosphoserine" evidence="23">
    <location>
        <position position="581"/>
    </location>
</feature>
<feature type="modified residue" description="Phosphothreonine" evidence="23">
    <location>
        <position position="590"/>
    </location>
</feature>
<feature type="sequence conflict" description="In Ref. 1; CAA49587." evidence="19" ref="1">
    <original>S</original>
    <variation>F</variation>
    <location>
        <position position="137"/>
    </location>
</feature>
<feature type="sequence conflict" description="In Ref. 1; CAA49587." evidence="19" ref="1">
    <original>S</original>
    <variation>N</variation>
    <location>
        <position position="370"/>
    </location>
</feature>
<feature type="sequence conflict" description="In Ref. 1; CAA49587." evidence="19" ref="1">
    <original>L</original>
    <variation>F</variation>
    <location>
        <position position="418"/>
    </location>
</feature>
<feature type="turn" evidence="25">
    <location>
        <begin position="12"/>
        <end position="14"/>
    </location>
</feature>
<feature type="helix" evidence="25">
    <location>
        <begin position="34"/>
        <end position="37"/>
    </location>
</feature>
<feature type="turn" evidence="24">
    <location>
        <begin position="47"/>
        <end position="49"/>
    </location>
</feature>
<sequence length="720" mass="77881">MAKRVADAQIQRETYDSNESDDDVTPSTKVASSAVMNRRKIAMPKRRMAFKPFGSAKSDETKQASSFSFLNRADGTGEAQVDNSPTTESNSRLKALNLQFKAKVDDLVLGKPLADLRPLFTRYELYIKNILEAPVKSIENPTQTKGNDAKPAKVEDVQKSSDSSSEDEVKVEGPKFTIDAKPPISDSVFSFGPKKENRKKDESDSENDIEIKGPEFKFSGTVSSDVFKLNPSTDKNEKKTETNAKPFSFSSATSTTEQTKSKNPLSLTEATKTNVDNNSKAEASFTFGTKHAADSQNNKPSFVFGQAAAKPSLEKSSFTFGSTTIEKKNDENSTSNSKPEKSSDSNDSNPSFSFSIPSKNTPDASKPSFSFGVPNSSKNETSKPVFSFGAATPSAKEASQEDDNNNVEKPSSKPAFNLISNAGTEKEKESKKDSKPAFSFGISNGSESKDSDKPSLPSAVDGENDKKEATKPAFSFGINTNTTKTADTKAPTFTFGSSALADNKEDVKKPFSFGTSQPNNTPSFSFGKTTANLPANSSTSPAPSIPSTGFKFSLPFEQKGSQTTTNDSKEESTTEATGNESQDATKVDATPEESKPINLQNGEEDEVALFSQKAKLMTFNAETKSYDSRGVGEMKLLKKKDDPSKVRLLCRSDGMGNVLLNATVVDSFKYEPLAPGNDNLIKAPTVAADGKLVTYIVKFKQKEEGRSFTKAIEDAKKEMK</sequence>
<dbReference type="EMBL" id="X69964">
    <property type="protein sequence ID" value="CAA49587.1"/>
    <property type="molecule type" value="Genomic_DNA"/>
</dbReference>
<dbReference type="EMBL" id="U19028">
    <property type="protein sequence ID" value="AAB67259.1"/>
    <property type="molecule type" value="Genomic_DNA"/>
</dbReference>
<dbReference type="EMBL" id="BK006945">
    <property type="protein sequence ID" value="DAA09641.1"/>
    <property type="molecule type" value="Genomic_DNA"/>
</dbReference>
<dbReference type="PIR" id="S51340">
    <property type="entry name" value="S51340"/>
</dbReference>
<dbReference type="RefSeq" id="NP_013439.1">
    <property type="nucleotide sequence ID" value="NM_001182224.1"/>
</dbReference>
<dbReference type="PDB" id="1UN0">
    <property type="method" value="X-ray"/>
    <property type="resolution" value="2.60 A"/>
    <property type="chains" value="C/D=1-51"/>
</dbReference>
<dbReference type="PDB" id="2C1T">
    <property type="method" value="X-ray"/>
    <property type="resolution" value="2.60 A"/>
    <property type="chains" value="C/D=1-51"/>
</dbReference>
<dbReference type="PDBsum" id="1UN0"/>
<dbReference type="PDBsum" id="2C1T"/>
<dbReference type="SMR" id="P32499"/>
<dbReference type="BioGRID" id="31599">
    <property type="interactions" value="220"/>
</dbReference>
<dbReference type="ComplexPortal" id="CPX-824">
    <property type="entry name" value="Nuclear pore complex"/>
</dbReference>
<dbReference type="DIP" id="DIP-859N"/>
<dbReference type="FunCoup" id="P32499">
    <property type="interactions" value="286"/>
</dbReference>
<dbReference type="IntAct" id="P32499">
    <property type="interactions" value="31"/>
</dbReference>
<dbReference type="MINT" id="P32499"/>
<dbReference type="STRING" id="4932.YLR335W"/>
<dbReference type="TCDB" id="1.I.1.1.1">
    <property type="family name" value="the nuclear pore complex (npc) family"/>
</dbReference>
<dbReference type="GlyGen" id="P32499">
    <property type="glycosylation" value="3 sites, 1 O-linked glycan (3 sites)"/>
</dbReference>
<dbReference type="iPTMnet" id="P32499"/>
<dbReference type="PaxDb" id="4932-YLR335W"/>
<dbReference type="PeptideAtlas" id="P32499"/>
<dbReference type="DNASU" id="851048"/>
<dbReference type="EnsemblFungi" id="YLR335W_mRNA">
    <property type="protein sequence ID" value="YLR335W"/>
    <property type="gene ID" value="YLR335W"/>
</dbReference>
<dbReference type="GeneID" id="851048"/>
<dbReference type="KEGG" id="sce:YLR335W"/>
<dbReference type="AGR" id="SGD:S000004327"/>
<dbReference type="SGD" id="S000004327">
    <property type="gene designation" value="NUP2"/>
</dbReference>
<dbReference type="VEuPathDB" id="FungiDB:YLR335W"/>
<dbReference type="eggNOG" id="KOG0864">
    <property type="taxonomic scope" value="Eukaryota"/>
</dbReference>
<dbReference type="eggNOG" id="KOG4719">
    <property type="taxonomic scope" value="Eukaryota"/>
</dbReference>
<dbReference type="HOGENOM" id="CLU_018357_0_0_1"/>
<dbReference type="InParanoid" id="P32499"/>
<dbReference type="OMA" id="SDGMGHI"/>
<dbReference type="OrthoDB" id="185618at2759"/>
<dbReference type="BioCyc" id="YEAST:G3O-32414-MONOMER"/>
<dbReference type="Reactome" id="R-SCE-159236">
    <property type="pathway name" value="Transport of Mature mRNA derived from an Intron-Containing Transcript"/>
</dbReference>
<dbReference type="Reactome" id="R-SCE-3371453">
    <property type="pathway name" value="Regulation of HSF1-mediated heat shock response"/>
</dbReference>
<dbReference type="Reactome" id="R-SCE-4085377">
    <property type="pathway name" value="SUMOylation of SUMOylation proteins"/>
</dbReference>
<dbReference type="Reactome" id="R-SCE-4551638">
    <property type="pathway name" value="SUMOylation of chromatin organization proteins"/>
</dbReference>
<dbReference type="Reactome" id="R-SCE-4570464">
    <property type="pathway name" value="SUMOylation of RNA binding proteins"/>
</dbReference>
<dbReference type="BioGRID-ORCS" id="851048">
    <property type="hits" value="0 hits in 10 CRISPR screens"/>
</dbReference>
<dbReference type="EvolutionaryTrace" id="P32499"/>
<dbReference type="PRO" id="PR:P32499"/>
<dbReference type="Proteomes" id="UP000002311">
    <property type="component" value="Chromosome XII"/>
</dbReference>
<dbReference type="RNAct" id="P32499">
    <property type="molecule type" value="protein"/>
</dbReference>
<dbReference type="GO" id="GO:0000781">
    <property type="term" value="C:chromosome, telomeric region"/>
    <property type="evidence" value="ECO:0007669"/>
    <property type="project" value="GOC"/>
</dbReference>
<dbReference type="GO" id="GO:0005737">
    <property type="term" value="C:cytoplasm"/>
    <property type="evidence" value="ECO:0000314"/>
    <property type="project" value="CAFA"/>
</dbReference>
<dbReference type="GO" id="GO:0005739">
    <property type="term" value="C:mitochondrion"/>
    <property type="evidence" value="ECO:0007005"/>
    <property type="project" value="SGD"/>
</dbReference>
<dbReference type="GO" id="GO:0042564">
    <property type="term" value="C:NLS-dependent protein nuclear import complex"/>
    <property type="evidence" value="ECO:0000315"/>
    <property type="project" value="CAFA"/>
</dbReference>
<dbReference type="GO" id="GO:0005635">
    <property type="term" value="C:nuclear envelope"/>
    <property type="evidence" value="ECO:0000303"/>
    <property type="project" value="ComplexPortal"/>
</dbReference>
<dbReference type="GO" id="GO:0031965">
    <property type="term" value="C:nuclear membrane"/>
    <property type="evidence" value="ECO:0007669"/>
    <property type="project" value="UniProtKB-SubCell"/>
</dbReference>
<dbReference type="GO" id="GO:0005643">
    <property type="term" value="C:nuclear pore"/>
    <property type="evidence" value="ECO:0000303"/>
    <property type="project" value="ComplexPortal"/>
</dbReference>
<dbReference type="GO" id="GO:0044614">
    <property type="term" value="C:nuclear pore cytoplasmic filaments"/>
    <property type="evidence" value="ECO:0000314"/>
    <property type="project" value="SGD"/>
</dbReference>
<dbReference type="GO" id="GO:0044615">
    <property type="term" value="C:nuclear pore nuclear basket"/>
    <property type="evidence" value="ECO:0000314"/>
    <property type="project" value="SGD"/>
</dbReference>
<dbReference type="GO" id="GO:0061676">
    <property type="term" value="F:importin-alpha family protein binding"/>
    <property type="evidence" value="ECO:0000353"/>
    <property type="project" value="CAFA"/>
</dbReference>
<dbReference type="GO" id="GO:0031267">
    <property type="term" value="F:small GTPase binding"/>
    <property type="evidence" value="ECO:0000353"/>
    <property type="project" value="SGD"/>
</dbReference>
<dbReference type="GO" id="GO:0017056">
    <property type="term" value="F:structural constituent of nuclear pore"/>
    <property type="evidence" value="ECO:0000316"/>
    <property type="project" value="SGD"/>
</dbReference>
<dbReference type="GO" id="GO:0031990">
    <property type="term" value="P:mRNA export from nucleus in response to heat stress"/>
    <property type="evidence" value="ECO:0000315"/>
    <property type="project" value="SGD"/>
</dbReference>
<dbReference type="GO" id="GO:0006607">
    <property type="term" value="P:NLS-bearing protein import into nucleus"/>
    <property type="evidence" value="ECO:0000314"/>
    <property type="project" value="SGD"/>
</dbReference>
<dbReference type="GO" id="GO:0006913">
    <property type="term" value="P:nucleocytoplasmic transport"/>
    <property type="evidence" value="ECO:0000303"/>
    <property type="project" value="ComplexPortal"/>
</dbReference>
<dbReference type="GO" id="GO:0016973">
    <property type="term" value="P:poly(A)+ mRNA export from nucleus"/>
    <property type="evidence" value="ECO:0000315"/>
    <property type="project" value="SGD"/>
</dbReference>
<dbReference type="GO" id="GO:0000973">
    <property type="term" value="P:post-transcriptional tethering of RNA polymerase II gene DNA at nuclear periphery"/>
    <property type="evidence" value="ECO:0000315"/>
    <property type="project" value="SGD"/>
</dbReference>
<dbReference type="GO" id="GO:0006611">
    <property type="term" value="P:protein export from nucleus"/>
    <property type="evidence" value="ECO:0000315"/>
    <property type="project" value="SGD"/>
</dbReference>
<dbReference type="GO" id="GO:0036228">
    <property type="term" value="P:protein localization to nuclear inner membrane"/>
    <property type="evidence" value="ECO:0000315"/>
    <property type="project" value="SGD"/>
</dbReference>
<dbReference type="GO" id="GO:0030466">
    <property type="term" value="P:silent mating-type cassette heterochromatin formation"/>
    <property type="evidence" value="ECO:0000315"/>
    <property type="project" value="SGD"/>
</dbReference>
<dbReference type="GO" id="GO:0031509">
    <property type="term" value="P:subtelomeric heterochromatin formation"/>
    <property type="evidence" value="ECO:0000315"/>
    <property type="project" value="SGD"/>
</dbReference>
<dbReference type="GO" id="GO:0000972">
    <property type="term" value="P:transcription-dependent tethering of RNA polymerase II gene DNA at nuclear periphery"/>
    <property type="evidence" value="ECO:0000315"/>
    <property type="project" value="SGD"/>
</dbReference>
<dbReference type="DisProt" id="DP00222"/>
<dbReference type="FunFam" id="2.30.29.30:FF:000623">
    <property type="entry name" value="Nucleoporin nup61"/>
    <property type="match status" value="1"/>
</dbReference>
<dbReference type="Gene3D" id="2.30.29.30">
    <property type="entry name" value="Pleckstrin-homology domain (PH domain)/Phosphotyrosine-binding domain (PTB)"/>
    <property type="match status" value="1"/>
</dbReference>
<dbReference type="IDEAL" id="IID50007"/>
<dbReference type="InterPro" id="IPR053074">
    <property type="entry name" value="NPC_Nucleoporin"/>
</dbReference>
<dbReference type="InterPro" id="IPR015007">
    <property type="entry name" value="NUP2/50/61"/>
</dbReference>
<dbReference type="InterPro" id="IPR011993">
    <property type="entry name" value="PH-like_dom_sf"/>
</dbReference>
<dbReference type="InterPro" id="IPR000156">
    <property type="entry name" value="Ran_bind_dom"/>
</dbReference>
<dbReference type="PANTHER" id="PTHR38697">
    <property type="entry name" value="NUCLEAR PORE COMPLEX PROTEIN SIMILAR TO S. CEREVISIAE NUP2 (EUROFUNG)"/>
    <property type="match status" value="1"/>
</dbReference>
<dbReference type="PANTHER" id="PTHR38697:SF1">
    <property type="entry name" value="NUCLEAR PORE COMPLEX PROTEIN SIMILAR TO S. CEREVISIAE NUP2 (EUROFUNG)"/>
    <property type="match status" value="1"/>
</dbReference>
<dbReference type="Pfam" id="PF08911">
    <property type="entry name" value="NUP50"/>
    <property type="match status" value="1"/>
</dbReference>
<dbReference type="Pfam" id="PF00638">
    <property type="entry name" value="Ran_BP1"/>
    <property type="match status" value="1"/>
</dbReference>
<dbReference type="SMART" id="SM00160">
    <property type="entry name" value="RanBD"/>
    <property type="match status" value="1"/>
</dbReference>
<dbReference type="SUPFAM" id="SSF50729">
    <property type="entry name" value="PH domain-like"/>
    <property type="match status" value="1"/>
</dbReference>
<dbReference type="PROSITE" id="PS50196">
    <property type="entry name" value="RANBD1"/>
    <property type="match status" value="1"/>
</dbReference>
<protein>
    <recommendedName>
        <fullName>Nucleoporin NUP2</fullName>
    </recommendedName>
    <alternativeName>
        <fullName>Nuclear pore protein NUP2</fullName>
    </alternativeName>
    <alternativeName>
        <fullName>p95</fullName>
    </alternativeName>
</protein>
<organism>
    <name type="scientific">Saccharomyces cerevisiae (strain ATCC 204508 / S288c)</name>
    <name type="common">Baker's yeast</name>
    <dbReference type="NCBI Taxonomy" id="559292"/>
    <lineage>
        <taxon>Eukaryota</taxon>
        <taxon>Fungi</taxon>
        <taxon>Dikarya</taxon>
        <taxon>Ascomycota</taxon>
        <taxon>Saccharomycotina</taxon>
        <taxon>Saccharomycetes</taxon>
        <taxon>Saccharomycetales</taxon>
        <taxon>Saccharomycetaceae</taxon>
        <taxon>Saccharomyces</taxon>
    </lineage>
</organism>
<gene>
    <name type="primary">NUP2</name>
    <name type="ordered locus">YLR335W</name>
    <name type="ORF">L8300.9</name>
</gene>
<proteinExistence type="evidence at protein level"/>
<name>NUP2_YEAST</name>
<comment type="function">
    <text evidence="4 5 6 7 8 9 10 11 12 13 14 15 18">Functions as a component of the nuclear pore complex (NPC). NPC components, collectively referred to as nucleoporins (NUPs), can play the role of both NPC structural components and of docking or interaction partners for transiently associated nuclear transport factors. Active directional transport is assured by both, a Phe-Gly (FG) repeat affinity gradient for these transport factors across the NPC and a transport cofactor concentration gradient across the nuclear envelope (GSP1 and GSP2 GTPases associated predominantly with GTP in the nucleus, with GDP in the cytoplasm). As one of the FG repeat nucleoporins NUP2 is involved in interactions with and guidance of nuclear transport receptors such as SRP1-KAP95 (importin alpha and beta) through the NPC. Like the closely related NUP1 it also plays an important role in disassembling and recycling SRP1-KAP95 to the cytoplasm after nuclear import. Upon entry of the heterotrimeric SRP1-KAP95-cargo complex in the nucleus, NUP2 binds through its N-terminus to the SRP1 nuclear localization signal (NLS) binding site, thus accelerating the release of the NLS-cargo. SRP1 in turn is released from NUP2 by binding of the GSP1-GTP associated export factor CSE1. NUP2 may also have a chromatin boundary/insulator activity through indirect interaction with genomic DNA via CSE1 and blocking of heterochromatin spreading.</text>
</comment>
<comment type="subunit">
    <text evidence="3 4 6 8 12 15 16">Component of the nuclear pore complex (NPC). NPC constitutes the exclusive means of nucleocytoplasmic transport. NPCs allow the passive diffusion of ions and small molecules and the active, nuclear transport receptor-mediated bidirectional transport of macromolecules such as proteins, RNAs, ribonucleoparticles (RNPs), and ribosomal subunits across the nuclear envelope. Due to its 8-fold rotational symmetry, all subunits are present with 8 copies or multiples thereof. Binds to the nuclear basket of the NPC through NUP60 in a (GSP1, GSP2) GTPase-GTP-dependent manner. Interacts through its FG repeats with nuclear transport factors. Interacts with KAP122.</text>
</comment>
<comment type="interaction">
    <interactant intactId="EBI-12401">
        <id>P32499</id>
    </interactant>
    <interactant intactId="EBI-9145">
        <id>Q06142</id>
        <label>KAP95</label>
    </interactant>
    <organismsDiffer>false</organismsDiffer>
    <experiments>6</experiments>
</comment>
<comment type="interaction">
    <interactant intactId="EBI-12401">
        <id>P32499</id>
    </interactant>
    <interactant intactId="EBI-20731">
        <id>P39705</id>
        <label>NUP60</label>
    </interactant>
    <organismsDiffer>false</organismsDiffer>
    <experiments>3</experiments>
</comment>
<comment type="interaction">
    <interactant intactId="EBI-12401">
        <id>P32499</id>
    </interactant>
    <interactant intactId="EBI-1797">
        <id>Q02821</id>
        <label>SRP1</label>
    </interactant>
    <organismsDiffer>false</organismsDiffer>
    <experiments>5</experiments>
</comment>
<comment type="subcellular location">
    <subcellularLocation>
        <location evidence="4">Nucleus</location>
        <location evidence="4">Nuclear pore complex</location>
    </subcellularLocation>
    <subcellularLocation>
        <location>Nucleus membrane</location>
        <topology>Peripheral membrane protein</topology>
        <orientation>Nucleoplasmic side</orientation>
    </subcellularLocation>
</comment>
<comment type="domain">
    <text>Contains FG repeats. FG repeats are interaction sites for karyopherins (importins, exportins) and form probably an affinity gradient, guiding the transport proteins unidirectionally with their cargo through the NPC. FG repeat regions are highly flexible and lack ordered secondary structure. The overall conservation of FG repeats regarding exact sequence, spacing, and repeat unit length is limited. FG repeat types and their physico-chemical environment change across the NPC from the nucleoplasmic to the cytoplasmic side: FXFG repeats are especially abundant in NUPs on the nucleoplasmic side (in a highly charged environment and enriched in Ser and Thr).</text>
</comment>
<comment type="miscellaneous">
    <text evidence="17">Present with 2960 molecules/cell in log phase SD medium.</text>
</comment>
<keyword id="KW-0002">3D-structure</keyword>
<keyword id="KW-0472">Membrane</keyword>
<keyword id="KW-0509">mRNA transport</keyword>
<keyword id="KW-0906">Nuclear pore complex</keyword>
<keyword id="KW-0539">Nucleus</keyword>
<keyword id="KW-0597">Phosphoprotein</keyword>
<keyword id="KW-0653">Protein transport</keyword>
<keyword id="KW-1185">Reference proteome</keyword>
<keyword id="KW-0677">Repeat</keyword>
<keyword id="KW-0811">Translocation</keyword>
<keyword id="KW-0813">Transport</keyword>
<evidence type="ECO:0000255" key="1">
    <source>
        <dbReference type="PROSITE-ProRule" id="PRU00164"/>
    </source>
</evidence>
<evidence type="ECO:0000256" key="2">
    <source>
        <dbReference type="SAM" id="MobiDB-lite"/>
    </source>
</evidence>
<evidence type="ECO:0000269" key="3">
    <source>
    </source>
</evidence>
<evidence type="ECO:0000269" key="4">
    <source>
    </source>
</evidence>
<evidence type="ECO:0000269" key="5">
    <source>
    </source>
</evidence>
<evidence type="ECO:0000269" key="6">
    <source>
    </source>
</evidence>
<evidence type="ECO:0000269" key="7">
    <source>
    </source>
</evidence>
<evidence type="ECO:0000269" key="8">
    <source>
    </source>
</evidence>
<evidence type="ECO:0000269" key="9">
    <source>
    </source>
</evidence>
<evidence type="ECO:0000269" key="10">
    <source>
    </source>
</evidence>
<evidence type="ECO:0000269" key="11">
    <source>
    </source>
</evidence>
<evidence type="ECO:0000269" key="12">
    <source>
    </source>
</evidence>
<evidence type="ECO:0000269" key="13">
    <source>
    </source>
</evidence>
<evidence type="ECO:0000269" key="14">
    <source>
    </source>
</evidence>
<evidence type="ECO:0000269" key="15">
    <source>
    </source>
</evidence>
<evidence type="ECO:0000269" key="16">
    <source>
    </source>
</evidence>
<evidence type="ECO:0000269" key="17">
    <source>
    </source>
</evidence>
<evidence type="ECO:0000269" key="18">
    <source>
    </source>
</evidence>
<evidence type="ECO:0000305" key="19"/>
<evidence type="ECO:0007744" key="20">
    <source>
    </source>
</evidence>
<evidence type="ECO:0007744" key="21">
    <source>
    </source>
</evidence>
<evidence type="ECO:0007744" key="22">
    <source>
    </source>
</evidence>
<evidence type="ECO:0007744" key="23">
    <source>
    </source>
</evidence>
<evidence type="ECO:0007829" key="24">
    <source>
        <dbReference type="PDB" id="1UN0"/>
    </source>
</evidence>
<evidence type="ECO:0007829" key="25">
    <source>
        <dbReference type="PDB" id="2C1T"/>
    </source>
</evidence>
<accession>P32499</accession>
<accession>D6VYX5</accession>
<accession>Q06130</accession>